<organism>
    <name type="scientific">Streptococcus pneumoniae (strain Taiwan19F-14)</name>
    <dbReference type="NCBI Taxonomy" id="487213"/>
    <lineage>
        <taxon>Bacteria</taxon>
        <taxon>Bacillati</taxon>
        <taxon>Bacillota</taxon>
        <taxon>Bacilli</taxon>
        <taxon>Lactobacillales</taxon>
        <taxon>Streptococcaceae</taxon>
        <taxon>Streptococcus</taxon>
    </lineage>
</organism>
<accession>C1CS62</accession>
<keyword id="KW-0413">Isomerase</keyword>
<proteinExistence type="inferred from homology"/>
<sequence>MENLKKMAGIKAAEFVSDGMVVGLGTGSTAYYFVEEIGRRIKEEGLQITAVTTSSVTTKQAEGLNIPLKSIDQVDFVDVTVDGADEVDSQFNGIKGGGGALLMEKVVATPSKEYIWVVDESKLVEKLGAFKLPVEVVQYGAEQVFRHFERAGYKPSFREKDGQRFVTDMQNFIIDLALDVIENPIAFGQELDHVVGVVEHGLFNQMVDKVIVAGRDGVQISTSKKGK</sequence>
<protein>
    <recommendedName>
        <fullName evidence="1">Ribose-5-phosphate isomerase A</fullName>
        <ecNumber evidence="1">5.3.1.6</ecNumber>
    </recommendedName>
    <alternativeName>
        <fullName evidence="1">Phosphoriboisomerase A</fullName>
        <shortName evidence="1">PRI</shortName>
    </alternativeName>
</protein>
<reference key="1">
    <citation type="journal article" date="2010" name="Genome Biol.">
        <title>Structure and dynamics of the pan-genome of Streptococcus pneumoniae and closely related species.</title>
        <authorList>
            <person name="Donati C."/>
            <person name="Hiller N.L."/>
            <person name="Tettelin H."/>
            <person name="Muzzi A."/>
            <person name="Croucher N.J."/>
            <person name="Angiuoli S.V."/>
            <person name="Oggioni M."/>
            <person name="Dunning Hotopp J.C."/>
            <person name="Hu F.Z."/>
            <person name="Riley D.R."/>
            <person name="Covacci A."/>
            <person name="Mitchell T.J."/>
            <person name="Bentley S.D."/>
            <person name="Kilian M."/>
            <person name="Ehrlich G.D."/>
            <person name="Rappuoli R."/>
            <person name="Moxon E.R."/>
            <person name="Masignani V."/>
        </authorList>
    </citation>
    <scope>NUCLEOTIDE SEQUENCE [LARGE SCALE GENOMIC DNA]</scope>
    <source>
        <strain>Taiwan19F-14</strain>
    </source>
</reference>
<feature type="chain" id="PRO_1000194727" description="Ribose-5-phosphate isomerase A">
    <location>
        <begin position="1"/>
        <end position="227"/>
    </location>
</feature>
<feature type="active site" description="Proton acceptor" evidence="1">
    <location>
        <position position="104"/>
    </location>
</feature>
<feature type="binding site" evidence="1">
    <location>
        <begin position="26"/>
        <end position="29"/>
    </location>
    <ligand>
        <name>substrate</name>
    </ligand>
</feature>
<feature type="binding site" evidence="1">
    <location>
        <begin position="82"/>
        <end position="85"/>
    </location>
    <ligand>
        <name>substrate</name>
    </ligand>
</feature>
<feature type="binding site" evidence="1">
    <location>
        <begin position="95"/>
        <end position="98"/>
    </location>
    <ligand>
        <name>substrate</name>
    </ligand>
</feature>
<feature type="binding site" evidence="1">
    <location>
        <position position="122"/>
    </location>
    <ligand>
        <name>substrate</name>
    </ligand>
</feature>
<gene>
    <name evidence="1" type="primary">rpiA</name>
    <name type="ordered locus">SPT_1374</name>
</gene>
<evidence type="ECO:0000255" key="1">
    <source>
        <dbReference type="HAMAP-Rule" id="MF_00170"/>
    </source>
</evidence>
<dbReference type="EC" id="5.3.1.6" evidence="1"/>
<dbReference type="EMBL" id="CP000921">
    <property type="protein sequence ID" value="ACO23422.1"/>
    <property type="molecule type" value="Genomic_DNA"/>
</dbReference>
<dbReference type="RefSeq" id="WP_000429299.1">
    <property type="nucleotide sequence ID" value="NC_012469.1"/>
</dbReference>
<dbReference type="SMR" id="C1CS62"/>
<dbReference type="GeneID" id="45653812"/>
<dbReference type="KEGG" id="snt:SPT_1374"/>
<dbReference type="HOGENOM" id="CLU_056590_1_0_9"/>
<dbReference type="UniPathway" id="UPA00115">
    <property type="reaction ID" value="UER00412"/>
</dbReference>
<dbReference type="GO" id="GO:0004751">
    <property type="term" value="F:ribose-5-phosphate isomerase activity"/>
    <property type="evidence" value="ECO:0007669"/>
    <property type="project" value="UniProtKB-UniRule"/>
</dbReference>
<dbReference type="GO" id="GO:0009052">
    <property type="term" value="P:pentose-phosphate shunt, non-oxidative branch"/>
    <property type="evidence" value="ECO:0007669"/>
    <property type="project" value="UniProtKB-UniRule"/>
</dbReference>
<dbReference type="CDD" id="cd01398">
    <property type="entry name" value="RPI_A"/>
    <property type="match status" value="1"/>
</dbReference>
<dbReference type="FunFam" id="3.40.50.1360:FF:000001">
    <property type="entry name" value="Ribose-5-phosphate isomerase A"/>
    <property type="match status" value="1"/>
</dbReference>
<dbReference type="Gene3D" id="3.30.70.260">
    <property type="match status" value="1"/>
</dbReference>
<dbReference type="Gene3D" id="3.40.50.1360">
    <property type="match status" value="1"/>
</dbReference>
<dbReference type="HAMAP" id="MF_00170">
    <property type="entry name" value="Rib_5P_isom_A"/>
    <property type="match status" value="1"/>
</dbReference>
<dbReference type="InterPro" id="IPR037171">
    <property type="entry name" value="NagB/RpiA_transferase-like"/>
</dbReference>
<dbReference type="InterPro" id="IPR050262">
    <property type="entry name" value="Ribose-5P_isomerase"/>
</dbReference>
<dbReference type="InterPro" id="IPR020672">
    <property type="entry name" value="Ribose5P_isomerase_typA_subgr"/>
</dbReference>
<dbReference type="InterPro" id="IPR004788">
    <property type="entry name" value="Ribose5P_isomerase_type_A"/>
</dbReference>
<dbReference type="NCBIfam" id="NF001924">
    <property type="entry name" value="PRK00702.1"/>
    <property type="match status" value="1"/>
</dbReference>
<dbReference type="NCBIfam" id="TIGR00021">
    <property type="entry name" value="rpiA"/>
    <property type="match status" value="1"/>
</dbReference>
<dbReference type="PANTHER" id="PTHR43748">
    <property type="entry name" value="RIBOSE-5-PHOSPHATE ISOMERASE 3, CHLOROPLASTIC-RELATED"/>
    <property type="match status" value="1"/>
</dbReference>
<dbReference type="PANTHER" id="PTHR43748:SF3">
    <property type="entry name" value="RIBOSE-5-PHOSPHATE ISOMERASE 3, CHLOROPLASTIC-RELATED"/>
    <property type="match status" value="1"/>
</dbReference>
<dbReference type="Pfam" id="PF06026">
    <property type="entry name" value="Rib_5-P_isom_A"/>
    <property type="match status" value="1"/>
</dbReference>
<dbReference type="SUPFAM" id="SSF75445">
    <property type="entry name" value="D-ribose-5-phosphate isomerase (RpiA), lid domain"/>
    <property type="match status" value="1"/>
</dbReference>
<dbReference type="SUPFAM" id="SSF100950">
    <property type="entry name" value="NagB/RpiA/CoA transferase-like"/>
    <property type="match status" value="1"/>
</dbReference>
<comment type="function">
    <text evidence="1">Catalyzes the reversible conversion of ribose-5-phosphate to ribulose 5-phosphate.</text>
</comment>
<comment type="catalytic activity">
    <reaction evidence="1">
        <text>aldehydo-D-ribose 5-phosphate = D-ribulose 5-phosphate</text>
        <dbReference type="Rhea" id="RHEA:14657"/>
        <dbReference type="ChEBI" id="CHEBI:58121"/>
        <dbReference type="ChEBI" id="CHEBI:58273"/>
        <dbReference type="EC" id="5.3.1.6"/>
    </reaction>
</comment>
<comment type="pathway">
    <text evidence="1">Carbohydrate degradation; pentose phosphate pathway; D-ribose 5-phosphate from D-ribulose 5-phosphate (non-oxidative stage): step 1/1.</text>
</comment>
<comment type="subunit">
    <text evidence="1">Homodimer.</text>
</comment>
<comment type="similarity">
    <text evidence="1">Belongs to the ribose 5-phosphate isomerase family.</text>
</comment>
<name>RPIA_STRZT</name>